<gene>
    <name type="ordered locus">MJECL27</name>
</gene>
<geneLocation type="plasmid">
    <name>large ECE</name>
</geneLocation>
<reference key="1">
    <citation type="journal article" date="1996" name="Science">
        <title>Complete genome sequence of the methanogenic archaeon, Methanococcus jannaschii.</title>
        <authorList>
            <person name="Bult C.J."/>
            <person name="White O."/>
            <person name="Olsen G.J."/>
            <person name="Zhou L."/>
            <person name="Fleischmann R.D."/>
            <person name="Sutton G.G."/>
            <person name="Blake J.A."/>
            <person name="FitzGerald L.M."/>
            <person name="Clayton R.A."/>
            <person name="Gocayne J.D."/>
            <person name="Kerlavage A.R."/>
            <person name="Dougherty B.A."/>
            <person name="Tomb J.-F."/>
            <person name="Adams M.D."/>
            <person name="Reich C.I."/>
            <person name="Overbeek R."/>
            <person name="Kirkness E.F."/>
            <person name="Weinstock K.G."/>
            <person name="Merrick J.M."/>
            <person name="Glodek A."/>
            <person name="Scott J.L."/>
            <person name="Geoghagen N.S.M."/>
            <person name="Weidman J.F."/>
            <person name="Fuhrmann J.L."/>
            <person name="Nguyen D."/>
            <person name="Utterback T.R."/>
            <person name="Kelley J.M."/>
            <person name="Peterson J.D."/>
            <person name="Sadow P.W."/>
            <person name="Hanna M.C."/>
            <person name="Cotton M.D."/>
            <person name="Roberts K.M."/>
            <person name="Hurst M.A."/>
            <person name="Kaine B.P."/>
            <person name="Borodovsky M."/>
            <person name="Klenk H.-P."/>
            <person name="Fraser C.M."/>
            <person name="Smith H.O."/>
            <person name="Woese C.R."/>
            <person name="Venter J.C."/>
        </authorList>
    </citation>
    <scope>NUCLEOTIDE SEQUENCE [LARGE SCALE GENOMIC DNA]</scope>
    <source>
        <strain>ATCC 43067 / DSM 2661 / JAL-1 / JCM 10045 / NBRC 100440</strain>
    </source>
</reference>
<sequence>MDILGEIVNVDEYVEKLELQKNDIGFYKCPFCDYTNADAKVVRKHVKSKHLEEIEKELKKLESQKSKNNGKKQTGQKKQGKGKKQPKRVRETCVSTQERKDYVLFFCHNHKVRLHLANGEVLEGKCCCKDPYTVLVDVGKGDVVIVNKAYIVKYVPLDLEKL</sequence>
<organism>
    <name type="scientific">Methanocaldococcus jannaschii (strain ATCC 43067 / DSM 2661 / JAL-1 / JCM 10045 / NBRC 100440)</name>
    <name type="common">Methanococcus jannaschii</name>
    <dbReference type="NCBI Taxonomy" id="243232"/>
    <lineage>
        <taxon>Archaea</taxon>
        <taxon>Methanobacteriati</taxon>
        <taxon>Methanobacteriota</taxon>
        <taxon>Methanomada group</taxon>
        <taxon>Methanococci</taxon>
        <taxon>Methanococcales</taxon>
        <taxon>Methanocaldococcaceae</taxon>
        <taxon>Methanocaldococcus</taxon>
    </lineage>
</organism>
<evidence type="ECO:0000256" key="1">
    <source>
        <dbReference type="SAM" id="MobiDB-lite"/>
    </source>
</evidence>
<evidence type="ECO:0000305" key="2"/>
<protein>
    <recommendedName>
        <fullName>Uncharacterized protein MJECL27</fullName>
    </recommendedName>
</protein>
<dbReference type="EMBL" id="L77118">
    <property type="protein sequence ID" value="AAC37098.1"/>
    <property type="molecule type" value="Genomic_DNA"/>
</dbReference>
<dbReference type="PIR" id="B64513">
    <property type="entry name" value="B64513"/>
</dbReference>
<dbReference type="SMR" id="Q60286"/>
<dbReference type="PaxDb" id="243232-MJ_ECL27"/>
<dbReference type="EnsemblBacteria" id="AAC37098">
    <property type="protein sequence ID" value="AAC37098"/>
    <property type="gene ID" value="MJ_ECL27"/>
</dbReference>
<dbReference type="KEGG" id="mja:MJ_ECL27"/>
<dbReference type="eggNOG" id="arCOG12102">
    <property type="taxonomic scope" value="Archaea"/>
</dbReference>
<dbReference type="HOGENOM" id="CLU_1801728_0_0_2"/>
<dbReference type="InParanoid" id="Q60286"/>
<dbReference type="Proteomes" id="UP000000805">
    <property type="component" value="Plasmid pDSM2661_1"/>
</dbReference>
<dbReference type="GO" id="GO:0008270">
    <property type="term" value="F:zinc ion binding"/>
    <property type="evidence" value="ECO:0007669"/>
    <property type="project" value="UniProtKB-KW"/>
</dbReference>
<comment type="similarity">
    <text evidence="2">To M.jannaschii MJECS06.</text>
</comment>
<feature type="chain" id="PRO_0000107513" description="Uncharacterized protein MJECL27">
    <location>
        <begin position="1"/>
        <end position="162"/>
    </location>
</feature>
<feature type="zinc finger region" description="C2H2-type">
    <location>
        <begin position="29"/>
        <end position="50"/>
    </location>
</feature>
<feature type="region of interest" description="Disordered" evidence="1">
    <location>
        <begin position="60"/>
        <end position="93"/>
    </location>
</feature>
<feature type="compositionally biased region" description="Basic residues" evidence="1">
    <location>
        <begin position="68"/>
        <end position="87"/>
    </location>
</feature>
<name>Y3527_METJA</name>
<keyword id="KW-0479">Metal-binding</keyword>
<keyword id="KW-0614">Plasmid</keyword>
<keyword id="KW-1185">Reference proteome</keyword>
<keyword id="KW-0862">Zinc</keyword>
<keyword id="KW-0863">Zinc-finger</keyword>
<proteinExistence type="predicted"/>
<accession>Q60286</accession>